<feature type="signal peptide" evidence="5">
    <location>
        <begin position="1"/>
        <end position="22"/>
    </location>
</feature>
<feature type="chain" id="PRO_0000035320" description="Potassium channel toxin alpha-KTx 15.8">
    <location>
        <begin position="23"/>
        <end position="60"/>
    </location>
</feature>
<feature type="site" description="Basic residue of the functional dyad" evidence="1">
    <location>
        <position position="49"/>
    </location>
</feature>
<feature type="site" description="Aromatic residue of the functional dyad" evidence="1">
    <location>
        <position position="58"/>
    </location>
</feature>
<feature type="modified residue" description="Pyrrolidone carboxylic acid" evidence="4">
    <location>
        <position position="23"/>
    </location>
</feature>
<feature type="disulfide bond" evidence="6 10">
    <location>
        <begin position="30"/>
        <end position="50"/>
    </location>
</feature>
<feature type="disulfide bond" evidence="6 10">
    <location>
        <begin position="35"/>
        <end position="55"/>
    </location>
</feature>
<feature type="disulfide bond" evidence="6 10">
    <location>
        <begin position="39"/>
        <end position="57"/>
    </location>
</feature>
<feature type="strand" evidence="11">
    <location>
        <begin position="24"/>
        <end position="29"/>
    </location>
</feature>
<feature type="strand" evidence="11">
    <location>
        <begin position="31"/>
        <end position="33"/>
    </location>
</feature>
<feature type="helix" evidence="11">
    <location>
        <begin position="36"/>
        <end position="43"/>
    </location>
</feature>
<feature type="strand" evidence="11">
    <location>
        <begin position="44"/>
        <end position="46"/>
    </location>
</feature>
<feature type="strand" evidence="11">
    <location>
        <begin position="48"/>
        <end position="51"/>
    </location>
</feature>
<feature type="strand" evidence="11">
    <location>
        <begin position="54"/>
        <end position="57"/>
    </location>
</feature>
<name>KA158_OLIMR</name>
<comment type="function">
    <text evidence="2 3 6">Blocker of A-type voltage-gated potassium channels of cerebellar granular cells. May also inhibit Kv4/KCND when coexpressed with DPP6 or DPP10. The occlusion of the outer entry of the K(+) conducting pore is partially reversible and affects both open and closed channels. It shares the same target in rat brain than BmTX3 (AC Q8I0L5) and AmmTX3 (AC P60208). Also shows a weak inhibition on Kv1.2/KCNA2 and Kv1.3/KCNA3 voltage-gated potassium channels (PubMed:29483648).</text>
</comment>
<comment type="subcellular location">
    <subcellularLocation>
        <location evidence="8">Secreted</location>
    </subcellularLocation>
</comment>
<comment type="tissue specificity">
    <text evidence="8">Expressed by the venom gland.</text>
</comment>
<comment type="domain">
    <text evidence="6">Has the structural arrangement of an alpha-helix connected to a beta-sheet by disulfide bonds (CSalpha/beta).</text>
</comment>
<comment type="similarity">
    <text evidence="7">Belongs to the short scorpion toxin superfamily. Potassium channel inhibitor family. Alpha-KTx 15 subfamily.</text>
</comment>
<sequence>MKFSSIILLTLLICSMSIFGNCQVQTNVKCQGGSCASVCRREIGVAAGKCINGKCVCYRN</sequence>
<organism>
    <name type="scientific">Olivierus martensii</name>
    <name type="common">Manchurian scorpion</name>
    <name type="synonym">Mesobuthus martensii</name>
    <dbReference type="NCBI Taxonomy" id="34649"/>
    <lineage>
        <taxon>Eukaryota</taxon>
        <taxon>Metazoa</taxon>
        <taxon>Ecdysozoa</taxon>
        <taxon>Arthropoda</taxon>
        <taxon>Chelicerata</taxon>
        <taxon>Arachnida</taxon>
        <taxon>Scorpiones</taxon>
        <taxon>Buthida</taxon>
        <taxon>Buthoidea</taxon>
        <taxon>Buthidae</taxon>
        <taxon>Olivierus</taxon>
    </lineage>
</organism>
<keyword id="KW-0002">3D-structure</keyword>
<keyword id="KW-1015">Disulfide bond</keyword>
<keyword id="KW-0872">Ion channel impairing toxin</keyword>
<keyword id="KW-0528">Neurotoxin</keyword>
<keyword id="KW-0632">Potassium channel impairing toxin</keyword>
<keyword id="KW-0873">Pyrrolidone carboxylic acid</keyword>
<keyword id="KW-0964">Secreted</keyword>
<keyword id="KW-0732">Signal</keyword>
<keyword id="KW-0800">Toxin</keyword>
<proteinExistence type="evidence at protein level"/>
<protein>
    <recommendedName>
        <fullName>Potassium channel toxin alpha-KTx 15.8</fullName>
    </recommendedName>
    <alternativeName>
        <fullName>BmKKx1</fullName>
    </alternativeName>
    <alternativeName>
        <fullName evidence="9">Neurotoxin Kk4</fullName>
    </alternativeName>
</protein>
<dbReference type="EMBL" id="AF153692">
    <property type="protein sequence ID" value="AAP33619.1"/>
    <property type="molecule type" value="mRNA"/>
</dbReference>
<dbReference type="PDB" id="6AY8">
    <property type="method" value="X-ray"/>
    <property type="resolution" value="1.78 A"/>
    <property type="chains" value="A=23-60"/>
</dbReference>
<dbReference type="PDBsum" id="6AY8"/>
<dbReference type="SMR" id="Q86BX0"/>
<dbReference type="GO" id="GO:0005576">
    <property type="term" value="C:extracellular region"/>
    <property type="evidence" value="ECO:0007669"/>
    <property type="project" value="UniProtKB-SubCell"/>
</dbReference>
<dbReference type="GO" id="GO:0008200">
    <property type="term" value="F:ion channel inhibitor activity"/>
    <property type="evidence" value="ECO:0007669"/>
    <property type="project" value="InterPro"/>
</dbReference>
<dbReference type="GO" id="GO:0015459">
    <property type="term" value="F:potassium channel regulator activity"/>
    <property type="evidence" value="ECO:0007669"/>
    <property type="project" value="UniProtKB-KW"/>
</dbReference>
<dbReference type="GO" id="GO:0090729">
    <property type="term" value="F:toxin activity"/>
    <property type="evidence" value="ECO:0007669"/>
    <property type="project" value="UniProtKB-KW"/>
</dbReference>
<dbReference type="Gene3D" id="3.30.30.10">
    <property type="entry name" value="Knottin, scorpion toxin-like"/>
    <property type="match status" value="1"/>
</dbReference>
<dbReference type="InterPro" id="IPR036574">
    <property type="entry name" value="Scorpion_toxin-like_sf"/>
</dbReference>
<dbReference type="InterPro" id="IPR001947">
    <property type="entry name" value="Scorpion_toxinS_K_inh"/>
</dbReference>
<dbReference type="Pfam" id="PF00451">
    <property type="entry name" value="Toxin_2"/>
    <property type="match status" value="1"/>
</dbReference>
<dbReference type="SUPFAM" id="SSF57095">
    <property type="entry name" value="Scorpion toxin-like"/>
    <property type="match status" value="1"/>
</dbReference>
<dbReference type="PROSITE" id="PS01138">
    <property type="entry name" value="SCORP_SHORT_TOXIN"/>
    <property type="match status" value="1"/>
</dbReference>
<reference key="1">
    <citation type="journal article" date="2006" name="Peptides">
        <title>Molecular dissection of venom from Chinese scorpion Mesobuthus martensii: identification and characterization of four novel disulfide-bridged venom peptides.</title>
        <authorList>
            <person name="Zeng X.-C."/>
            <person name="Luo F."/>
            <person name="Li W.-X."/>
        </authorList>
    </citation>
    <scope>NUCLEOTIDE SEQUENCE [MRNA]</scope>
    <source>
        <tissue>Venom gland</tissue>
    </source>
</reference>
<reference key="2">
    <citation type="journal article" date="2018" name="Nat. Struct. Mol. Biol.">
        <title>Screening, large-scale production and structure-based classification of cystine-dense peptides.</title>
        <authorList>
            <person name="Correnti C.E."/>
            <person name="Gewe M.M."/>
            <person name="Mehlin C."/>
            <person name="Bandaranayake A.D."/>
            <person name="Johnsen W.A."/>
            <person name="Rupert P.B."/>
            <person name="Brusniak M.Y."/>
            <person name="Clarke M."/>
            <person name="Burke S.E."/>
            <person name="De Van Der Schueren W."/>
            <person name="Pilat K."/>
            <person name="Turnbaugh S.M."/>
            <person name="May D."/>
            <person name="Watson A."/>
            <person name="Chan M.K."/>
            <person name="Bahl C.D."/>
            <person name="Olson J.M."/>
            <person name="Strong R.K."/>
        </authorList>
    </citation>
    <scope>X-RAY CRYSTALLOGRAPHY (1.78 ANGSTROMS) OF 23-60</scope>
    <scope>FUNCTION</scope>
    <scope>SYNTHESIS OF 23-60</scope>
</reference>
<evidence type="ECO:0000250" key="1"/>
<evidence type="ECO:0000250" key="2">
    <source>
        <dbReference type="UniProtKB" id="P60208"/>
    </source>
</evidence>
<evidence type="ECO:0000250" key="3">
    <source>
        <dbReference type="UniProtKB" id="Q867F4"/>
    </source>
</evidence>
<evidence type="ECO:0000250" key="4">
    <source>
        <dbReference type="UniProtKB" id="Q8I0L5"/>
    </source>
</evidence>
<evidence type="ECO:0000255" key="5"/>
<evidence type="ECO:0000269" key="6">
    <source>
    </source>
</evidence>
<evidence type="ECO:0000305" key="7"/>
<evidence type="ECO:0000305" key="8">
    <source>
    </source>
</evidence>
<evidence type="ECO:0000312" key="9">
    <source>
        <dbReference type="EMBL" id="AAP33619.1"/>
    </source>
</evidence>
<evidence type="ECO:0000312" key="10">
    <source>
        <dbReference type="PDB" id="6AY8"/>
    </source>
</evidence>
<evidence type="ECO:0007829" key="11">
    <source>
        <dbReference type="PDB" id="6AY8"/>
    </source>
</evidence>
<accession>Q86BX0</accession>